<comment type="function">
    <text evidence="1">Endonuclease that is involved in the suppression of homologous recombination and thus may have a key role in the control of bacterial genetic diversity.</text>
</comment>
<comment type="function">
    <text evidence="1">Acts as a ribosome collision sensor, splitting the ribosome into its 2 subunits. Detects stalled/collided 70S ribosomes which it binds and splits by an ATP-hydrolysis driven conformational change. Acts upstream of the ribosome quality control system (RQC), a ribosome-associated complex that mediates the extraction of incompletely synthesized nascent chains from stalled ribosomes and their subsequent degradation. Probably generates substrates for RQC.</text>
</comment>
<comment type="subunit">
    <text evidence="1">Homodimer. Binds to stalled ribosomes, contacting rRNA.</text>
</comment>
<comment type="similarity">
    <text evidence="1">Belongs to the DNA mismatch repair MutS family. MutS2 subfamily.</text>
</comment>
<gene>
    <name evidence="1" type="primary">mutS2</name>
    <name evidence="1" type="synonym">rqcU</name>
    <name type="ordered locus">SAV1144</name>
</gene>
<accession>P65495</accession>
<accession>Q99UW1</accession>
<evidence type="ECO:0000255" key="1">
    <source>
        <dbReference type="HAMAP-Rule" id="MF_00092"/>
    </source>
</evidence>
<feature type="chain" id="PRO_0000115228" description="Endonuclease MutS2">
    <location>
        <begin position="1"/>
        <end position="782"/>
    </location>
</feature>
<feature type="domain" description="Smr" evidence="1">
    <location>
        <begin position="707"/>
        <end position="782"/>
    </location>
</feature>
<feature type="binding site" evidence="1">
    <location>
        <begin position="336"/>
        <end position="343"/>
    </location>
    <ligand>
        <name>ATP</name>
        <dbReference type="ChEBI" id="CHEBI:30616"/>
    </ligand>
</feature>
<reference key="1">
    <citation type="journal article" date="2001" name="Lancet">
        <title>Whole genome sequencing of meticillin-resistant Staphylococcus aureus.</title>
        <authorList>
            <person name="Kuroda M."/>
            <person name="Ohta T."/>
            <person name="Uchiyama I."/>
            <person name="Baba T."/>
            <person name="Yuzawa H."/>
            <person name="Kobayashi I."/>
            <person name="Cui L."/>
            <person name="Oguchi A."/>
            <person name="Aoki K."/>
            <person name="Nagai Y."/>
            <person name="Lian J.-Q."/>
            <person name="Ito T."/>
            <person name="Kanamori M."/>
            <person name="Matsumaru H."/>
            <person name="Maruyama A."/>
            <person name="Murakami H."/>
            <person name="Hosoyama A."/>
            <person name="Mizutani-Ui Y."/>
            <person name="Takahashi N.K."/>
            <person name="Sawano T."/>
            <person name="Inoue R."/>
            <person name="Kaito C."/>
            <person name="Sekimizu K."/>
            <person name="Hirakawa H."/>
            <person name="Kuhara S."/>
            <person name="Goto S."/>
            <person name="Yabuzaki J."/>
            <person name="Kanehisa M."/>
            <person name="Yamashita A."/>
            <person name="Oshima K."/>
            <person name="Furuya K."/>
            <person name="Yoshino C."/>
            <person name="Shiba T."/>
            <person name="Hattori M."/>
            <person name="Ogasawara N."/>
            <person name="Hayashi H."/>
            <person name="Hiramatsu K."/>
        </authorList>
    </citation>
    <scope>NUCLEOTIDE SEQUENCE [LARGE SCALE GENOMIC DNA]</scope>
    <source>
        <strain>Mu50 / ATCC 700699</strain>
    </source>
</reference>
<sequence>MRQKTLDVLEFEKIKSLVANETISDLGLEKVNQMMPATNFETVVFQMEETDEIAQIYNKHRLPSLSGLSKVSAFIHRADIGGVLNVSELNLIKRLIQVQNQFKTFYNQLVEEDEGVKYPILDDKMNQLPVLTDLFHQINETCDTYDLYDNASYELQGIRSKISSTNQRIRQNLDRIVKSQANQKKLSDAIVTVRNERNVIPVKAEYRQDFNGIVHDQSASGQTLYIEPSSVVEMNNQISRLRHDEAIEKERVLTQLTGYVAADKDALLVAEQVMGQLDFLIAKARYSRSIKGTKPIFKEERTVYLPKAYHPLLNRETVVANTIEFMEDIETVIITGPNTGGKTVTLKTLGLIIVMAQSGLLIPTLDGSQLSVFKNVYCDIGDEQSIEQSLSTFSSHMTNIVEILKHADKHSLVLFDELGAGTDPSEGAALAMSILDHVRKIGSLVMATTHYPELKAYSYNREGVMNASVEFDVDTLSPTYKLLMGVPGRSNAFDISKKLGLSLNIINKAKTMIGTDEKEINEMIESLERNYKRVETQRLELDRLVKEAEQVHDDLSKQYQQFQNYEKSLIEEAKEKANQKIKAATKEADDIIKDLRQLREQKGADVKEHELIDKKKRLDDHYEAKSIKQNVQKQKYDKIVAGDEVKVLSYGQKGEVLEIVNDEEAIVQMGIIKMKLPIEDLEKKQKEKVKPTKMVTRQNRQTIKTELDLRGYRYEDALIELDQYLDQAVLSNYEQVYIIHGKGTGALQKGVQQHLKKHKSVSDFRGGMPSEGGFGVTVATLK</sequence>
<organism>
    <name type="scientific">Staphylococcus aureus (strain Mu50 / ATCC 700699)</name>
    <dbReference type="NCBI Taxonomy" id="158878"/>
    <lineage>
        <taxon>Bacteria</taxon>
        <taxon>Bacillati</taxon>
        <taxon>Bacillota</taxon>
        <taxon>Bacilli</taxon>
        <taxon>Bacillales</taxon>
        <taxon>Staphylococcaceae</taxon>
        <taxon>Staphylococcus</taxon>
    </lineage>
</organism>
<dbReference type="EC" id="3.1.-.-" evidence="1"/>
<dbReference type="EC" id="3.6.4.-" evidence="1"/>
<dbReference type="EMBL" id="BA000017">
    <property type="protein sequence ID" value="BAB57306.1"/>
    <property type="molecule type" value="Genomic_DNA"/>
</dbReference>
<dbReference type="RefSeq" id="WP_001249275.1">
    <property type="nucleotide sequence ID" value="NC_002758.2"/>
</dbReference>
<dbReference type="SMR" id="P65495"/>
<dbReference type="KEGG" id="sav:SAV1144"/>
<dbReference type="HOGENOM" id="CLU_011252_2_1_9"/>
<dbReference type="PhylomeDB" id="P65495"/>
<dbReference type="Proteomes" id="UP000002481">
    <property type="component" value="Chromosome"/>
</dbReference>
<dbReference type="GO" id="GO:0005524">
    <property type="term" value="F:ATP binding"/>
    <property type="evidence" value="ECO:0007669"/>
    <property type="project" value="UniProtKB-UniRule"/>
</dbReference>
<dbReference type="GO" id="GO:0016887">
    <property type="term" value="F:ATP hydrolysis activity"/>
    <property type="evidence" value="ECO:0007669"/>
    <property type="project" value="InterPro"/>
</dbReference>
<dbReference type="GO" id="GO:0140664">
    <property type="term" value="F:ATP-dependent DNA damage sensor activity"/>
    <property type="evidence" value="ECO:0007669"/>
    <property type="project" value="InterPro"/>
</dbReference>
<dbReference type="GO" id="GO:0004519">
    <property type="term" value="F:endonuclease activity"/>
    <property type="evidence" value="ECO:0007669"/>
    <property type="project" value="UniProtKB-UniRule"/>
</dbReference>
<dbReference type="GO" id="GO:0030983">
    <property type="term" value="F:mismatched DNA binding"/>
    <property type="evidence" value="ECO:0007669"/>
    <property type="project" value="InterPro"/>
</dbReference>
<dbReference type="GO" id="GO:0043023">
    <property type="term" value="F:ribosomal large subunit binding"/>
    <property type="evidence" value="ECO:0007669"/>
    <property type="project" value="UniProtKB-UniRule"/>
</dbReference>
<dbReference type="GO" id="GO:0019843">
    <property type="term" value="F:rRNA binding"/>
    <property type="evidence" value="ECO:0007669"/>
    <property type="project" value="UniProtKB-UniRule"/>
</dbReference>
<dbReference type="GO" id="GO:0006298">
    <property type="term" value="P:mismatch repair"/>
    <property type="evidence" value="ECO:0007669"/>
    <property type="project" value="InterPro"/>
</dbReference>
<dbReference type="GO" id="GO:0045910">
    <property type="term" value="P:negative regulation of DNA recombination"/>
    <property type="evidence" value="ECO:0007669"/>
    <property type="project" value="InterPro"/>
</dbReference>
<dbReference type="GO" id="GO:0072344">
    <property type="term" value="P:rescue of stalled ribosome"/>
    <property type="evidence" value="ECO:0007669"/>
    <property type="project" value="UniProtKB-UniRule"/>
</dbReference>
<dbReference type="CDD" id="cd03280">
    <property type="entry name" value="ABC_MutS2"/>
    <property type="match status" value="1"/>
</dbReference>
<dbReference type="FunFam" id="3.30.1370.110:FF:000006">
    <property type="entry name" value="Endonuclease MutS2"/>
    <property type="match status" value="1"/>
</dbReference>
<dbReference type="FunFam" id="3.40.50.300:FF:000830">
    <property type="entry name" value="Endonuclease MutS2"/>
    <property type="match status" value="1"/>
</dbReference>
<dbReference type="Gene3D" id="3.30.1370.110">
    <property type="match status" value="1"/>
</dbReference>
<dbReference type="Gene3D" id="3.40.50.300">
    <property type="entry name" value="P-loop containing nucleotide triphosphate hydrolases"/>
    <property type="match status" value="1"/>
</dbReference>
<dbReference type="HAMAP" id="MF_00092">
    <property type="entry name" value="MutS2"/>
    <property type="match status" value="1"/>
</dbReference>
<dbReference type="InterPro" id="IPR000432">
    <property type="entry name" value="DNA_mismatch_repair_MutS_C"/>
</dbReference>
<dbReference type="InterPro" id="IPR007696">
    <property type="entry name" value="DNA_mismatch_repair_MutS_core"/>
</dbReference>
<dbReference type="InterPro" id="IPR036187">
    <property type="entry name" value="DNA_mismatch_repair_MutS_sf"/>
</dbReference>
<dbReference type="InterPro" id="IPR046893">
    <property type="entry name" value="MSSS"/>
</dbReference>
<dbReference type="InterPro" id="IPR045076">
    <property type="entry name" value="MutS"/>
</dbReference>
<dbReference type="InterPro" id="IPR005747">
    <property type="entry name" value="MutS2"/>
</dbReference>
<dbReference type="InterPro" id="IPR027417">
    <property type="entry name" value="P-loop_NTPase"/>
</dbReference>
<dbReference type="InterPro" id="IPR002625">
    <property type="entry name" value="Smr_dom"/>
</dbReference>
<dbReference type="InterPro" id="IPR036063">
    <property type="entry name" value="Smr_dom_sf"/>
</dbReference>
<dbReference type="NCBIfam" id="TIGR01069">
    <property type="entry name" value="mutS2"/>
    <property type="match status" value="1"/>
</dbReference>
<dbReference type="PANTHER" id="PTHR48466:SF2">
    <property type="entry name" value="OS10G0509000 PROTEIN"/>
    <property type="match status" value="1"/>
</dbReference>
<dbReference type="PANTHER" id="PTHR48466">
    <property type="entry name" value="OS10G0509000 PROTEIN-RELATED"/>
    <property type="match status" value="1"/>
</dbReference>
<dbReference type="Pfam" id="PF20297">
    <property type="entry name" value="MSSS"/>
    <property type="match status" value="1"/>
</dbReference>
<dbReference type="Pfam" id="PF00488">
    <property type="entry name" value="MutS_V"/>
    <property type="match status" value="1"/>
</dbReference>
<dbReference type="Pfam" id="PF01713">
    <property type="entry name" value="Smr"/>
    <property type="match status" value="1"/>
</dbReference>
<dbReference type="PIRSF" id="PIRSF005814">
    <property type="entry name" value="MutS_YshD"/>
    <property type="match status" value="1"/>
</dbReference>
<dbReference type="SMART" id="SM00534">
    <property type="entry name" value="MUTSac"/>
    <property type="match status" value="1"/>
</dbReference>
<dbReference type="SMART" id="SM00533">
    <property type="entry name" value="MUTSd"/>
    <property type="match status" value="1"/>
</dbReference>
<dbReference type="SMART" id="SM00463">
    <property type="entry name" value="SMR"/>
    <property type="match status" value="1"/>
</dbReference>
<dbReference type="SUPFAM" id="SSF48334">
    <property type="entry name" value="DNA repair protein MutS, domain III"/>
    <property type="match status" value="1"/>
</dbReference>
<dbReference type="SUPFAM" id="SSF52540">
    <property type="entry name" value="P-loop containing nucleoside triphosphate hydrolases"/>
    <property type="match status" value="1"/>
</dbReference>
<dbReference type="SUPFAM" id="SSF160443">
    <property type="entry name" value="SMR domain-like"/>
    <property type="match status" value="1"/>
</dbReference>
<dbReference type="PROSITE" id="PS00486">
    <property type="entry name" value="DNA_MISMATCH_REPAIR_2"/>
    <property type="match status" value="1"/>
</dbReference>
<dbReference type="PROSITE" id="PS50828">
    <property type="entry name" value="SMR"/>
    <property type="match status" value="1"/>
</dbReference>
<protein>
    <recommendedName>
        <fullName evidence="1">Endonuclease MutS2</fullName>
        <ecNumber evidence="1">3.1.-.-</ecNumber>
    </recommendedName>
    <alternativeName>
        <fullName evidence="1">Ribosome-associated protein quality control-upstream factor</fullName>
        <shortName evidence="1">RQC-upstream factor</shortName>
        <shortName evidence="1">RqcU</shortName>
        <ecNumber evidence="1">3.6.4.-</ecNumber>
    </alternativeName>
</protein>
<keyword id="KW-0067">ATP-binding</keyword>
<keyword id="KW-0238">DNA-binding</keyword>
<keyword id="KW-0255">Endonuclease</keyword>
<keyword id="KW-0378">Hydrolase</keyword>
<keyword id="KW-0540">Nuclease</keyword>
<keyword id="KW-0547">Nucleotide-binding</keyword>
<keyword id="KW-0694">RNA-binding</keyword>
<keyword id="KW-0699">rRNA-binding</keyword>
<name>MUTS2_STAAM</name>
<proteinExistence type="inferred from homology"/>